<organism>
    <name type="scientific">Nitratidesulfovibrio vulgaris (strain DSM 19637 / Miyazaki F)</name>
    <name type="common">Desulfovibrio vulgaris</name>
    <dbReference type="NCBI Taxonomy" id="883"/>
    <lineage>
        <taxon>Bacteria</taxon>
        <taxon>Pseudomonadati</taxon>
        <taxon>Thermodesulfobacteriota</taxon>
        <taxon>Desulfovibrionia</taxon>
        <taxon>Desulfovibrionales</taxon>
        <taxon>Desulfovibrionaceae</taxon>
        <taxon>Nitratidesulfovibrio</taxon>
    </lineage>
</organism>
<dbReference type="EC" id="2.7.2.3" evidence="1"/>
<dbReference type="EMBL" id="CP001197">
    <property type="protein sequence ID" value="ACL07930.1"/>
    <property type="molecule type" value="Genomic_DNA"/>
</dbReference>
<dbReference type="SMR" id="B8DPM3"/>
<dbReference type="STRING" id="883.DvMF_0975"/>
<dbReference type="KEGG" id="dvm:DvMF_0975"/>
<dbReference type="eggNOG" id="COG0126">
    <property type="taxonomic scope" value="Bacteria"/>
</dbReference>
<dbReference type="HOGENOM" id="CLU_025427_0_2_7"/>
<dbReference type="OrthoDB" id="9808460at2"/>
<dbReference type="UniPathway" id="UPA00109">
    <property type="reaction ID" value="UER00185"/>
</dbReference>
<dbReference type="GO" id="GO:0005829">
    <property type="term" value="C:cytosol"/>
    <property type="evidence" value="ECO:0007669"/>
    <property type="project" value="TreeGrafter"/>
</dbReference>
<dbReference type="GO" id="GO:0043531">
    <property type="term" value="F:ADP binding"/>
    <property type="evidence" value="ECO:0007669"/>
    <property type="project" value="TreeGrafter"/>
</dbReference>
<dbReference type="GO" id="GO:0005524">
    <property type="term" value="F:ATP binding"/>
    <property type="evidence" value="ECO:0007669"/>
    <property type="project" value="UniProtKB-KW"/>
</dbReference>
<dbReference type="GO" id="GO:0004618">
    <property type="term" value="F:phosphoglycerate kinase activity"/>
    <property type="evidence" value="ECO:0007669"/>
    <property type="project" value="UniProtKB-UniRule"/>
</dbReference>
<dbReference type="GO" id="GO:0006094">
    <property type="term" value="P:gluconeogenesis"/>
    <property type="evidence" value="ECO:0007669"/>
    <property type="project" value="TreeGrafter"/>
</dbReference>
<dbReference type="GO" id="GO:0006096">
    <property type="term" value="P:glycolytic process"/>
    <property type="evidence" value="ECO:0007669"/>
    <property type="project" value="UniProtKB-UniRule"/>
</dbReference>
<dbReference type="FunFam" id="3.40.50.1260:FF:000001">
    <property type="entry name" value="Phosphoglycerate kinase"/>
    <property type="match status" value="1"/>
</dbReference>
<dbReference type="FunFam" id="3.40.50.1260:FF:000002">
    <property type="entry name" value="Phosphoglycerate kinase"/>
    <property type="match status" value="1"/>
</dbReference>
<dbReference type="Gene3D" id="3.40.50.1260">
    <property type="entry name" value="Phosphoglycerate kinase, N-terminal domain"/>
    <property type="match status" value="2"/>
</dbReference>
<dbReference type="HAMAP" id="MF_00145">
    <property type="entry name" value="Phosphoglyc_kinase"/>
    <property type="match status" value="1"/>
</dbReference>
<dbReference type="InterPro" id="IPR001576">
    <property type="entry name" value="Phosphoglycerate_kinase"/>
</dbReference>
<dbReference type="InterPro" id="IPR015911">
    <property type="entry name" value="Phosphoglycerate_kinase_CS"/>
</dbReference>
<dbReference type="InterPro" id="IPR015824">
    <property type="entry name" value="Phosphoglycerate_kinase_N"/>
</dbReference>
<dbReference type="InterPro" id="IPR036043">
    <property type="entry name" value="Phosphoglycerate_kinase_sf"/>
</dbReference>
<dbReference type="PANTHER" id="PTHR11406">
    <property type="entry name" value="PHOSPHOGLYCERATE KINASE"/>
    <property type="match status" value="1"/>
</dbReference>
<dbReference type="PANTHER" id="PTHR11406:SF23">
    <property type="entry name" value="PHOSPHOGLYCERATE KINASE 1, CHLOROPLASTIC-RELATED"/>
    <property type="match status" value="1"/>
</dbReference>
<dbReference type="Pfam" id="PF00162">
    <property type="entry name" value="PGK"/>
    <property type="match status" value="1"/>
</dbReference>
<dbReference type="PIRSF" id="PIRSF000724">
    <property type="entry name" value="Pgk"/>
    <property type="match status" value="1"/>
</dbReference>
<dbReference type="PRINTS" id="PR00477">
    <property type="entry name" value="PHGLYCKINASE"/>
</dbReference>
<dbReference type="SUPFAM" id="SSF53748">
    <property type="entry name" value="Phosphoglycerate kinase"/>
    <property type="match status" value="1"/>
</dbReference>
<dbReference type="PROSITE" id="PS00111">
    <property type="entry name" value="PGLYCERATE_KINASE"/>
    <property type="match status" value="1"/>
</dbReference>
<comment type="catalytic activity">
    <reaction evidence="1">
        <text>(2R)-3-phosphoglycerate + ATP = (2R)-3-phospho-glyceroyl phosphate + ADP</text>
        <dbReference type="Rhea" id="RHEA:14801"/>
        <dbReference type="ChEBI" id="CHEBI:30616"/>
        <dbReference type="ChEBI" id="CHEBI:57604"/>
        <dbReference type="ChEBI" id="CHEBI:58272"/>
        <dbReference type="ChEBI" id="CHEBI:456216"/>
        <dbReference type="EC" id="2.7.2.3"/>
    </reaction>
</comment>
<comment type="pathway">
    <text evidence="1">Carbohydrate degradation; glycolysis; pyruvate from D-glyceraldehyde 3-phosphate: step 2/5.</text>
</comment>
<comment type="subunit">
    <text evidence="1">Monomer.</text>
</comment>
<comment type="subcellular location">
    <subcellularLocation>
        <location evidence="1">Cytoplasm</location>
    </subcellularLocation>
</comment>
<comment type="similarity">
    <text evidence="1">Belongs to the phosphoglycerate kinase family.</text>
</comment>
<keyword id="KW-0067">ATP-binding</keyword>
<keyword id="KW-0963">Cytoplasm</keyword>
<keyword id="KW-0324">Glycolysis</keyword>
<keyword id="KW-0418">Kinase</keyword>
<keyword id="KW-0547">Nucleotide-binding</keyword>
<keyword id="KW-0808">Transferase</keyword>
<name>PGK_NITV9</name>
<accession>B8DPM3</accession>
<gene>
    <name evidence="1" type="primary">pgk</name>
    <name type="ordered locus">DvMF_0975</name>
</gene>
<sequence>MAVLKMTDLDLKGKRVLLREDLNVPLKDGKVTSDKRIRAALPSIEMALKAGARVLLVSHLGRPTEGEFDPAFSLAPVAEHLSRALGFQVPLVRDYIDGIEVAEGQCVLCENVRFLKGEKKDDEALGRKLAALCDIFVMDAFGAAHRAQASTHAAVRFAKVACAGPLLAAELDALSRALDAPAKPMVGIIGGSKVSTKLTLLDTLSKKVDRLIVGGGIANNFIKAAGHEVGRSLYEPELVDEAARLMAAARAAGGEIPVPVDVVVGPEFADSAPATVRKVSEVKPDEMILDIGPETAKLYRDILMQAGTIVWNGPVGAFEVEQFGQGTKALCMAVADSPAFSLAGGGDTVAAIEKYGVVDRISYMSTGGGAFLEFLEGKTLPAVAVLEERSSKG</sequence>
<proteinExistence type="inferred from homology"/>
<feature type="chain" id="PRO_1000192826" description="Phosphoglycerate kinase">
    <location>
        <begin position="1"/>
        <end position="393"/>
    </location>
</feature>
<feature type="binding site" evidence="1">
    <location>
        <begin position="21"/>
        <end position="23"/>
    </location>
    <ligand>
        <name>substrate</name>
    </ligand>
</feature>
<feature type="binding site" evidence="1">
    <location>
        <position position="36"/>
    </location>
    <ligand>
        <name>substrate</name>
    </ligand>
</feature>
<feature type="binding site" evidence="1">
    <location>
        <begin position="59"/>
        <end position="62"/>
    </location>
    <ligand>
        <name>substrate</name>
    </ligand>
</feature>
<feature type="binding site" evidence="1">
    <location>
        <position position="113"/>
    </location>
    <ligand>
        <name>substrate</name>
    </ligand>
</feature>
<feature type="binding site" evidence="1">
    <location>
        <position position="146"/>
    </location>
    <ligand>
        <name>substrate</name>
    </ligand>
</feature>
<feature type="binding site" evidence="1">
    <location>
        <position position="197"/>
    </location>
    <ligand>
        <name>ATP</name>
        <dbReference type="ChEBI" id="CHEBI:30616"/>
    </ligand>
</feature>
<feature type="binding site" evidence="1">
    <location>
        <position position="319"/>
    </location>
    <ligand>
        <name>ATP</name>
        <dbReference type="ChEBI" id="CHEBI:30616"/>
    </ligand>
</feature>
<feature type="binding site" evidence="1">
    <location>
        <begin position="345"/>
        <end position="348"/>
    </location>
    <ligand>
        <name>ATP</name>
        <dbReference type="ChEBI" id="CHEBI:30616"/>
    </ligand>
</feature>
<reference key="1">
    <citation type="submission" date="2008-10" db="EMBL/GenBank/DDBJ databases">
        <title>Complete sequence of Desulfovibrio vulgaris str. 'Miyazaki F'.</title>
        <authorList>
            <person name="Lucas S."/>
            <person name="Copeland A."/>
            <person name="Lapidus A."/>
            <person name="Glavina del Rio T."/>
            <person name="Dalin E."/>
            <person name="Tice H."/>
            <person name="Bruce D."/>
            <person name="Goodwin L."/>
            <person name="Pitluck S."/>
            <person name="Sims D."/>
            <person name="Brettin T."/>
            <person name="Detter J.C."/>
            <person name="Han C."/>
            <person name="Larimer F."/>
            <person name="Land M."/>
            <person name="Hauser L."/>
            <person name="Kyrpides N."/>
            <person name="Mikhailova N."/>
            <person name="Hazen T.C."/>
            <person name="Richardson P."/>
        </authorList>
    </citation>
    <scope>NUCLEOTIDE SEQUENCE [LARGE SCALE GENOMIC DNA]</scope>
    <source>
        <strain>DSM 19637 / Miyazaki F</strain>
    </source>
</reference>
<evidence type="ECO:0000255" key="1">
    <source>
        <dbReference type="HAMAP-Rule" id="MF_00145"/>
    </source>
</evidence>
<protein>
    <recommendedName>
        <fullName evidence="1">Phosphoglycerate kinase</fullName>
        <ecNumber evidence="1">2.7.2.3</ecNumber>
    </recommendedName>
</protein>